<proteinExistence type="inferred from homology"/>
<sequence>MTARIIDGKVIAADLRGQVAREVERVKRDHGLTPGLAVVLVGNDPASEVYVRSKHTQTQAAGMASFEHKLPADVAQSELLALIDKLNHDPSVHGILVQLPLPKGLETEIVINAIDPAKDVDGLHPHNAGRLSGGQPALAPCTPLGCIILSKTVHPSLEGLNAIVIGRSNLVGRPLVQLLLNENATVTIAHSRSRDLAALTARADLVYAAVGRPEMVKRDWIKPGATVIDVGINRIPTAEGKTRLVGDVAYAEVAEVAGAITPVPGGVGQMTVACLLVNTLRAACAIAGLPKPAV</sequence>
<dbReference type="EC" id="1.5.1.5" evidence="1"/>
<dbReference type="EC" id="3.5.4.9" evidence="1"/>
<dbReference type="EMBL" id="CP000494">
    <property type="protein sequence ID" value="ABQ32564.1"/>
    <property type="molecule type" value="Genomic_DNA"/>
</dbReference>
<dbReference type="RefSeq" id="WP_012040620.1">
    <property type="nucleotide sequence ID" value="NC_009485.1"/>
</dbReference>
<dbReference type="SMR" id="A5E8S0"/>
<dbReference type="STRING" id="288000.BBta_0269"/>
<dbReference type="KEGG" id="bbt:BBta_0269"/>
<dbReference type="eggNOG" id="COG0190">
    <property type="taxonomic scope" value="Bacteria"/>
</dbReference>
<dbReference type="HOGENOM" id="CLU_034045_2_1_5"/>
<dbReference type="OrthoDB" id="9803580at2"/>
<dbReference type="UniPathway" id="UPA00193"/>
<dbReference type="Proteomes" id="UP000000246">
    <property type="component" value="Chromosome"/>
</dbReference>
<dbReference type="GO" id="GO:0005829">
    <property type="term" value="C:cytosol"/>
    <property type="evidence" value="ECO:0007669"/>
    <property type="project" value="TreeGrafter"/>
</dbReference>
<dbReference type="GO" id="GO:0004477">
    <property type="term" value="F:methenyltetrahydrofolate cyclohydrolase activity"/>
    <property type="evidence" value="ECO:0007669"/>
    <property type="project" value="UniProtKB-UniRule"/>
</dbReference>
<dbReference type="GO" id="GO:0004488">
    <property type="term" value="F:methylenetetrahydrofolate dehydrogenase (NADP+) activity"/>
    <property type="evidence" value="ECO:0007669"/>
    <property type="project" value="UniProtKB-UniRule"/>
</dbReference>
<dbReference type="GO" id="GO:0000105">
    <property type="term" value="P:L-histidine biosynthetic process"/>
    <property type="evidence" value="ECO:0007669"/>
    <property type="project" value="UniProtKB-KW"/>
</dbReference>
<dbReference type="GO" id="GO:0009086">
    <property type="term" value="P:methionine biosynthetic process"/>
    <property type="evidence" value="ECO:0007669"/>
    <property type="project" value="UniProtKB-KW"/>
</dbReference>
<dbReference type="GO" id="GO:0006164">
    <property type="term" value="P:purine nucleotide biosynthetic process"/>
    <property type="evidence" value="ECO:0007669"/>
    <property type="project" value="UniProtKB-KW"/>
</dbReference>
<dbReference type="GO" id="GO:0035999">
    <property type="term" value="P:tetrahydrofolate interconversion"/>
    <property type="evidence" value="ECO:0007669"/>
    <property type="project" value="UniProtKB-UniRule"/>
</dbReference>
<dbReference type="CDD" id="cd01080">
    <property type="entry name" value="NAD_bind_m-THF_DH_Cyclohyd"/>
    <property type="match status" value="1"/>
</dbReference>
<dbReference type="FunFam" id="3.40.50.720:FF:000006">
    <property type="entry name" value="Bifunctional protein FolD"/>
    <property type="match status" value="1"/>
</dbReference>
<dbReference type="FunFam" id="3.40.50.10860:FF:000005">
    <property type="entry name" value="C-1-tetrahydrofolate synthase, cytoplasmic, putative"/>
    <property type="match status" value="1"/>
</dbReference>
<dbReference type="Gene3D" id="3.40.50.10860">
    <property type="entry name" value="Leucine Dehydrogenase, chain A, domain 1"/>
    <property type="match status" value="1"/>
</dbReference>
<dbReference type="Gene3D" id="3.40.50.720">
    <property type="entry name" value="NAD(P)-binding Rossmann-like Domain"/>
    <property type="match status" value="1"/>
</dbReference>
<dbReference type="HAMAP" id="MF_01576">
    <property type="entry name" value="THF_DHG_CYH"/>
    <property type="match status" value="1"/>
</dbReference>
<dbReference type="InterPro" id="IPR046346">
    <property type="entry name" value="Aminoacid_DH-like_N_sf"/>
</dbReference>
<dbReference type="InterPro" id="IPR036291">
    <property type="entry name" value="NAD(P)-bd_dom_sf"/>
</dbReference>
<dbReference type="InterPro" id="IPR000672">
    <property type="entry name" value="THF_DH/CycHdrlase"/>
</dbReference>
<dbReference type="InterPro" id="IPR020630">
    <property type="entry name" value="THF_DH/CycHdrlase_cat_dom"/>
</dbReference>
<dbReference type="InterPro" id="IPR020867">
    <property type="entry name" value="THF_DH/CycHdrlase_CS"/>
</dbReference>
<dbReference type="InterPro" id="IPR020631">
    <property type="entry name" value="THF_DH/CycHdrlase_NAD-bd_dom"/>
</dbReference>
<dbReference type="NCBIfam" id="NF010783">
    <property type="entry name" value="PRK14186.1"/>
    <property type="match status" value="1"/>
</dbReference>
<dbReference type="NCBIfam" id="NF010785">
    <property type="entry name" value="PRK14188.1"/>
    <property type="match status" value="1"/>
</dbReference>
<dbReference type="PANTHER" id="PTHR48099:SF5">
    <property type="entry name" value="C-1-TETRAHYDROFOLATE SYNTHASE, CYTOPLASMIC"/>
    <property type="match status" value="1"/>
</dbReference>
<dbReference type="PANTHER" id="PTHR48099">
    <property type="entry name" value="C-1-TETRAHYDROFOLATE SYNTHASE, CYTOPLASMIC-RELATED"/>
    <property type="match status" value="1"/>
</dbReference>
<dbReference type="Pfam" id="PF00763">
    <property type="entry name" value="THF_DHG_CYH"/>
    <property type="match status" value="1"/>
</dbReference>
<dbReference type="Pfam" id="PF02882">
    <property type="entry name" value="THF_DHG_CYH_C"/>
    <property type="match status" value="1"/>
</dbReference>
<dbReference type="PRINTS" id="PR00085">
    <property type="entry name" value="THFDHDRGNASE"/>
</dbReference>
<dbReference type="SUPFAM" id="SSF53223">
    <property type="entry name" value="Aminoacid dehydrogenase-like, N-terminal domain"/>
    <property type="match status" value="1"/>
</dbReference>
<dbReference type="SUPFAM" id="SSF51735">
    <property type="entry name" value="NAD(P)-binding Rossmann-fold domains"/>
    <property type="match status" value="1"/>
</dbReference>
<dbReference type="PROSITE" id="PS00766">
    <property type="entry name" value="THF_DHG_CYH_1"/>
    <property type="match status" value="1"/>
</dbReference>
<accession>A5E8S0</accession>
<reference key="1">
    <citation type="journal article" date="2007" name="Science">
        <title>Legumes symbioses: absence of nod genes in photosynthetic bradyrhizobia.</title>
        <authorList>
            <person name="Giraud E."/>
            <person name="Moulin L."/>
            <person name="Vallenet D."/>
            <person name="Barbe V."/>
            <person name="Cytryn E."/>
            <person name="Avarre J.-C."/>
            <person name="Jaubert M."/>
            <person name="Simon D."/>
            <person name="Cartieaux F."/>
            <person name="Prin Y."/>
            <person name="Bena G."/>
            <person name="Hannibal L."/>
            <person name="Fardoux J."/>
            <person name="Kojadinovic M."/>
            <person name="Vuillet L."/>
            <person name="Lajus A."/>
            <person name="Cruveiller S."/>
            <person name="Rouy Z."/>
            <person name="Mangenot S."/>
            <person name="Segurens B."/>
            <person name="Dossat C."/>
            <person name="Franck W.L."/>
            <person name="Chang W.-S."/>
            <person name="Saunders E."/>
            <person name="Bruce D."/>
            <person name="Richardson P."/>
            <person name="Normand P."/>
            <person name="Dreyfus B."/>
            <person name="Pignol D."/>
            <person name="Stacey G."/>
            <person name="Emerich D."/>
            <person name="Vermeglio A."/>
            <person name="Medigue C."/>
            <person name="Sadowsky M."/>
        </authorList>
    </citation>
    <scope>NUCLEOTIDE SEQUENCE [LARGE SCALE GENOMIC DNA]</scope>
    <source>
        <strain>BTAi1 / ATCC BAA-1182</strain>
    </source>
</reference>
<gene>
    <name evidence="1" type="primary">folD</name>
    <name type="ordered locus">BBta_0269</name>
</gene>
<evidence type="ECO:0000255" key="1">
    <source>
        <dbReference type="HAMAP-Rule" id="MF_01576"/>
    </source>
</evidence>
<name>FOLD_BRASB</name>
<feature type="chain" id="PRO_0000305798" description="Bifunctional protein FolD">
    <location>
        <begin position="1"/>
        <end position="294"/>
    </location>
</feature>
<feature type="binding site" evidence="1">
    <location>
        <begin position="166"/>
        <end position="168"/>
    </location>
    <ligand>
        <name>NADP(+)</name>
        <dbReference type="ChEBI" id="CHEBI:58349"/>
    </ligand>
</feature>
<feature type="binding site" evidence="1">
    <location>
        <position position="191"/>
    </location>
    <ligand>
        <name>NADP(+)</name>
        <dbReference type="ChEBI" id="CHEBI:58349"/>
    </ligand>
</feature>
<feature type="binding site" evidence="1">
    <location>
        <position position="232"/>
    </location>
    <ligand>
        <name>NADP(+)</name>
        <dbReference type="ChEBI" id="CHEBI:58349"/>
    </ligand>
</feature>
<keyword id="KW-0028">Amino-acid biosynthesis</keyword>
<keyword id="KW-0368">Histidine biosynthesis</keyword>
<keyword id="KW-0378">Hydrolase</keyword>
<keyword id="KW-0486">Methionine biosynthesis</keyword>
<keyword id="KW-0511">Multifunctional enzyme</keyword>
<keyword id="KW-0521">NADP</keyword>
<keyword id="KW-0554">One-carbon metabolism</keyword>
<keyword id="KW-0560">Oxidoreductase</keyword>
<keyword id="KW-0658">Purine biosynthesis</keyword>
<keyword id="KW-1185">Reference proteome</keyword>
<organism>
    <name type="scientific">Bradyrhizobium sp. (strain BTAi1 / ATCC BAA-1182)</name>
    <dbReference type="NCBI Taxonomy" id="288000"/>
    <lineage>
        <taxon>Bacteria</taxon>
        <taxon>Pseudomonadati</taxon>
        <taxon>Pseudomonadota</taxon>
        <taxon>Alphaproteobacteria</taxon>
        <taxon>Hyphomicrobiales</taxon>
        <taxon>Nitrobacteraceae</taxon>
        <taxon>Bradyrhizobium</taxon>
    </lineage>
</organism>
<protein>
    <recommendedName>
        <fullName evidence="1">Bifunctional protein FolD</fullName>
    </recommendedName>
    <domain>
        <recommendedName>
            <fullName evidence="1">Methylenetetrahydrofolate dehydrogenase</fullName>
            <ecNumber evidence="1">1.5.1.5</ecNumber>
        </recommendedName>
    </domain>
    <domain>
        <recommendedName>
            <fullName evidence="1">Methenyltetrahydrofolate cyclohydrolase</fullName>
            <ecNumber evidence="1">3.5.4.9</ecNumber>
        </recommendedName>
    </domain>
</protein>
<comment type="function">
    <text evidence="1">Catalyzes the oxidation of 5,10-methylenetetrahydrofolate to 5,10-methenyltetrahydrofolate and then the hydrolysis of 5,10-methenyltetrahydrofolate to 10-formyltetrahydrofolate.</text>
</comment>
<comment type="catalytic activity">
    <reaction evidence="1">
        <text>(6R)-5,10-methylene-5,6,7,8-tetrahydrofolate + NADP(+) = (6R)-5,10-methenyltetrahydrofolate + NADPH</text>
        <dbReference type="Rhea" id="RHEA:22812"/>
        <dbReference type="ChEBI" id="CHEBI:15636"/>
        <dbReference type="ChEBI" id="CHEBI:57455"/>
        <dbReference type="ChEBI" id="CHEBI:57783"/>
        <dbReference type="ChEBI" id="CHEBI:58349"/>
        <dbReference type="EC" id="1.5.1.5"/>
    </reaction>
</comment>
<comment type="catalytic activity">
    <reaction evidence="1">
        <text>(6R)-5,10-methenyltetrahydrofolate + H2O = (6R)-10-formyltetrahydrofolate + H(+)</text>
        <dbReference type="Rhea" id="RHEA:23700"/>
        <dbReference type="ChEBI" id="CHEBI:15377"/>
        <dbReference type="ChEBI" id="CHEBI:15378"/>
        <dbReference type="ChEBI" id="CHEBI:57455"/>
        <dbReference type="ChEBI" id="CHEBI:195366"/>
        <dbReference type="EC" id="3.5.4.9"/>
    </reaction>
</comment>
<comment type="pathway">
    <text evidence="1">One-carbon metabolism; tetrahydrofolate interconversion.</text>
</comment>
<comment type="subunit">
    <text evidence="1">Homodimer.</text>
</comment>
<comment type="similarity">
    <text evidence="1">Belongs to the tetrahydrofolate dehydrogenase/cyclohydrolase family.</text>
</comment>